<proteinExistence type="inferred from homology"/>
<evidence type="ECO:0000250" key="1"/>
<evidence type="ECO:0000305" key="2"/>
<reference key="1">
    <citation type="journal article" date="2007" name="Science">
        <title>The Fusarium graminearum genome reveals a link between localized polymorphism and pathogen specialization.</title>
        <authorList>
            <person name="Cuomo C.A."/>
            <person name="Gueldener U."/>
            <person name="Xu J.-R."/>
            <person name="Trail F."/>
            <person name="Turgeon B.G."/>
            <person name="Di Pietro A."/>
            <person name="Walton J.D."/>
            <person name="Ma L.-J."/>
            <person name="Baker S.E."/>
            <person name="Rep M."/>
            <person name="Adam G."/>
            <person name="Antoniw J."/>
            <person name="Baldwin T."/>
            <person name="Calvo S.E."/>
            <person name="Chang Y.-L."/>
            <person name="DeCaprio D."/>
            <person name="Gale L.R."/>
            <person name="Gnerre S."/>
            <person name="Goswami R.S."/>
            <person name="Hammond-Kosack K."/>
            <person name="Harris L.J."/>
            <person name="Hilburn K."/>
            <person name="Kennell J.C."/>
            <person name="Kroken S."/>
            <person name="Magnuson J.K."/>
            <person name="Mannhaupt G."/>
            <person name="Mauceli E.W."/>
            <person name="Mewes H.-W."/>
            <person name="Mitterbauer R."/>
            <person name="Muehlbauer G."/>
            <person name="Muensterkoetter M."/>
            <person name="Nelson D."/>
            <person name="O'Donnell K."/>
            <person name="Ouellet T."/>
            <person name="Qi W."/>
            <person name="Quesneville H."/>
            <person name="Roncero M.I.G."/>
            <person name="Seong K.-Y."/>
            <person name="Tetko I.V."/>
            <person name="Urban M."/>
            <person name="Waalwijk C."/>
            <person name="Ward T.J."/>
            <person name="Yao J."/>
            <person name="Birren B.W."/>
            <person name="Kistler H.C."/>
        </authorList>
    </citation>
    <scope>NUCLEOTIDE SEQUENCE [LARGE SCALE GENOMIC DNA]</scope>
    <source>
        <strain>ATCC MYA-4620 / CBS 123657 / FGSC 9075 / NRRL 31084 / PH-1</strain>
    </source>
</reference>
<reference key="2">
    <citation type="journal article" date="2010" name="Nature">
        <title>Comparative genomics reveals mobile pathogenicity chromosomes in Fusarium.</title>
        <authorList>
            <person name="Ma L.-J."/>
            <person name="van der Does H.C."/>
            <person name="Borkovich K.A."/>
            <person name="Coleman J.J."/>
            <person name="Daboussi M.-J."/>
            <person name="Di Pietro A."/>
            <person name="Dufresne M."/>
            <person name="Freitag M."/>
            <person name="Grabherr M."/>
            <person name="Henrissat B."/>
            <person name="Houterman P.M."/>
            <person name="Kang S."/>
            <person name="Shim W.-B."/>
            <person name="Woloshuk C."/>
            <person name="Xie X."/>
            <person name="Xu J.-R."/>
            <person name="Antoniw J."/>
            <person name="Baker S.E."/>
            <person name="Bluhm B.H."/>
            <person name="Breakspear A."/>
            <person name="Brown D.W."/>
            <person name="Butchko R.A.E."/>
            <person name="Chapman S."/>
            <person name="Coulson R."/>
            <person name="Coutinho P.M."/>
            <person name="Danchin E.G.J."/>
            <person name="Diener A."/>
            <person name="Gale L.R."/>
            <person name="Gardiner D.M."/>
            <person name="Goff S."/>
            <person name="Hammond-Kosack K.E."/>
            <person name="Hilburn K."/>
            <person name="Hua-Van A."/>
            <person name="Jonkers W."/>
            <person name="Kazan K."/>
            <person name="Kodira C.D."/>
            <person name="Koehrsen M."/>
            <person name="Kumar L."/>
            <person name="Lee Y.-H."/>
            <person name="Li L."/>
            <person name="Manners J.M."/>
            <person name="Miranda-Saavedra D."/>
            <person name="Mukherjee M."/>
            <person name="Park G."/>
            <person name="Park J."/>
            <person name="Park S.-Y."/>
            <person name="Proctor R.H."/>
            <person name="Regev A."/>
            <person name="Ruiz-Roldan M.C."/>
            <person name="Sain D."/>
            <person name="Sakthikumar S."/>
            <person name="Sykes S."/>
            <person name="Schwartz D.C."/>
            <person name="Turgeon B.G."/>
            <person name="Wapinski I."/>
            <person name="Yoder O."/>
            <person name="Young S."/>
            <person name="Zeng Q."/>
            <person name="Zhou S."/>
            <person name="Galagan J."/>
            <person name="Cuomo C.A."/>
            <person name="Kistler H.C."/>
            <person name="Rep M."/>
        </authorList>
    </citation>
    <scope>GENOME REANNOTATION</scope>
    <source>
        <strain>ATCC MYA-4620 / CBS 123657 / FGSC 9075 / NRRL 31084 / PH-1</strain>
    </source>
</reference>
<reference key="3">
    <citation type="journal article" date="2015" name="BMC Genomics">
        <title>The completed genome sequence of the pathogenic ascomycete fungus Fusarium graminearum.</title>
        <authorList>
            <person name="King R."/>
            <person name="Urban M."/>
            <person name="Hammond-Kosack M.C.U."/>
            <person name="Hassani-Pak K."/>
            <person name="Hammond-Kosack K.E."/>
        </authorList>
    </citation>
    <scope>NUCLEOTIDE SEQUENCE [LARGE SCALE GENOMIC DNA]</scope>
    <source>
        <strain>ATCC MYA-4620 / CBS 123657 / FGSC 9075 / NRRL 31084 / PH-1</strain>
    </source>
</reference>
<sequence length="82" mass="9116">MDSTQVKAAVIKQVQQEANLVNARTLIEKLQETCFEKCVPKPGTSLSSGETTCMTSCMEKYMAAWNMVNSAYIARLRQESGH</sequence>
<name>TIM13_GIBZE</name>
<feature type="chain" id="PRO_0000228076" description="Mitochondrial import inner membrane translocase subunit TIM13">
    <location>
        <begin position="1"/>
        <end position="82"/>
    </location>
</feature>
<feature type="short sequence motif" description="Twin CX3C motif">
    <location>
        <begin position="34"/>
        <end position="57"/>
    </location>
</feature>
<feature type="disulfide bond" evidence="1">
    <location>
        <begin position="34"/>
        <end position="57"/>
    </location>
</feature>
<feature type="disulfide bond" evidence="1">
    <location>
        <begin position="38"/>
        <end position="53"/>
    </location>
</feature>
<accession>Q4I6B0</accession>
<accession>A0A0E0SA17</accession>
<accession>V6RGU2</accession>
<organism>
    <name type="scientific">Gibberella zeae (strain ATCC MYA-4620 / CBS 123657 / FGSC 9075 / NRRL 31084 / PH-1)</name>
    <name type="common">Wheat head blight fungus</name>
    <name type="synonym">Fusarium graminearum</name>
    <dbReference type="NCBI Taxonomy" id="229533"/>
    <lineage>
        <taxon>Eukaryota</taxon>
        <taxon>Fungi</taxon>
        <taxon>Dikarya</taxon>
        <taxon>Ascomycota</taxon>
        <taxon>Pezizomycotina</taxon>
        <taxon>Sordariomycetes</taxon>
        <taxon>Hypocreomycetidae</taxon>
        <taxon>Hypocreales</taxon>
        <taxon>Nectriaceae</taxon>
        <taxon>Fusarium</taxon>
    </lineage>
</organism>
<gene>
    <name type="primary">TIM13</name>
    <name type="ORF">FGRRES_07248</name>
    <name type="ORF">FGSG_07248</name>
</gene>
<comment type="function">
    <text evidence="1">Mitochondrial intermembrane chaperone that participates in the import and insertion of some multi-pass transmembrane proteins into the mitochondrial inner membrane. Also required for the transfer of beta-barrel precursors from the TOM complex to the sorting and assembly machinery (SAM complex) of the outer membrane. Acts as a chaperone-like protein that protects the hydrophobic precursors from aggregation and guide them through the mitochondrial intermembrane space. The TIM8-TIM13 complex is non essential and only mediates the import of few proteins, while the predominant TIM9-TIM10 70 kDa complex is crucial and mediates the import of much more proteins (By similarity).</text>
</comment>
<comment type="subunit">
    <text evidence="1">Heterohexamer; composed of 3 copies of TIM8 and 3 copies of TIM13, named soluble 70 kDa complex. Associates with the TIM22 complex, whose core is composed of TIM22 and TIM54. Interacts with the transmembrane regions of multi-pass transmembrane proteins in transit (By similarity).</text>
</comment>
<comment type="subcellular location">
    <subcellularLocation>
        <location evidence="1">Mitochondrion inner membrane</location>
        <topology evidence="1">Peripheral membrane protein</topology>
        <orientation evidence="1">Intermembrane side</orientation>
    </subcellularLocation>
</comment>
<comment type="domain">
    <text evidence="1">The twin CX3C motif contains 4 conserved Cys residues that form 2 disulfide bonds in the mitochondrial intermembrane space. However, during the transit of TIM13 from cytoplasm into mitochondrion, the Cys residues probably coordinate zinc, thereby preventing folding and allowing its transfer across mitochondrial outer membrane (By similarity).</text>
</comment>
<comment type="similarity">
    <text evidence="2">Belongs to the small Tim family.</text>
</comment>
<protein>
    <recommendedName>
        <fullName>Mitochondrial import inner membrane translocase subunit TIM13</fullName>
    </recommendedName>
</protein>
<dbReference type="EMBL" id="DS231666">
    <property type="protein sequence ID" value="ESU13479.1"/>
    <property type="molecule type" value="Genomic_DNA"/>
</dbReference>
<dbReference type="EMBL" id="HG970335">
    <property type="protein sequence ID" value="CEF83280.1"/>
    <property type="molecule type" value="Genomic_DNA"/>
</dbReference>
<dbReference type="RefSeq" id="XP_011326986.1">
    <property type="nucleotide sequence ID" value="XM_011328684.1"/>
</dbReference>
<dbReference type="SMR" id="Q4I6B0"/>
<dbReference type="FunCoup" id="Q4I6B0">
    <property type="interactions" value="423"/>
</dbReference>
<dbReference type="STRING" id="229533.Q4I6B0"/>
<dbReference type="GeneID" id="23554335"/>
<dbReference type="KEGG" id="fgr:FGSG_07248"/>
<dbReference type="VEuPathDB" id="FungiDB:FGRAMPH1_01G24341"/>
<dbReference type="eggNOG" id="KOG1733">
    <property type="taxonomic scope" value="Eukaryota"/>
</dbReference>
<dbReference type="HOGENOM" id="CLU_141397_0_1_1"/>
<dbReference type="InParanoid" id="Q4I6B0"/>
<dbReference type="OrthoDB" id="100915at110618"/>
<dbReference type="Proteomes" id="UP000070720">
    <property type="component" value="Chromosome 4"/>
</dbReference>
<dbReference type="GO" id="GO:0005743">
    <property type="term" value="C:mitochondrial inner membrane"/>
    <property type="evidence" value="ECO:0007669"/>
    <property type="project" value="UniProtKB-SubCell"/>
</dbReference>
<dbReference type="GO" id="GO:0046872">
    <property type="term" value="F:metal ion binding"/>
    <property type="evidence" value="ECO:0007669"/>
    <property type="project" value="UniProtKB-KW"/>
</dbReference>
<dbReference type="GO" id="GO:0015031">
    <property type="term" value="P:protein transport"/>
    <property type="evidence" value="ECO:0007669"/>
    <property type="project" value="UniProtKB-KW"/>
</dbReference>
<dbReference type="FunFam" id="1.10.287.810:FF:000001">
    <property type="entry name" value="mitochondrial import inner membrane translocase subunit TIM13"/>
    <property type="match status" value="1"/>
</dbReference>
<dbReference type="Gene3D" id="1.10.287.810">
    <property type="entry name" value="Mitochondrial import inner membrane translocase subunit tim13 like domains"/>
    <property type="match status" value="1"/>
</dbReference>
<dbReference type="InterPro" id="IPR004217">
    <property type="entry name" value="Tim10-like"/>
</dbReference>
<dbReference type="InterPro" id="IPR035427">
    <property type="entry name" value="Tim10-like_dom_sf"/>
</dbReference>
<dbReference type="Pfam" id="PF02953">
    <property type="entry name" value="zf-Tim10_DDP"/>
    <property type="match status" value="1"/>
</dbReference>
<dbReference type="SUPFAM" id="SSF144122">
    <property type="entry name" value="Tim10-like"/>
    <property type="match status" value="1"/>
</dbReference>
<keyword id="KW-0143">Chaperone</keyword>
<keyword id="KW-1015">Disulfide bond</keyword>
<keyword id="KW-0472">Membrane</keyword>
<keyword id="KW-0479">Metal-binding</keyword>
<keyword id="KW-0496">Mitochondrion</keyword>
<keyword id="KW-0999">Mitochondrion inner membrane</keyword>
<keyword id="KW-0653">Protein transport</keyword>
<keyword id="KW-1185">Reference proteome</keyword>
<keyword id="KW-0811">Translocation</keyword>
<keyword id="KW-0813">Transport</keyword>
<keyword id="KW-0862">Zinc</keyword>